<organism evidence="3">
    <name type="scientific">Faxonius limosus</name>
    <name type="common">Spinycheek crayfish</name>
    <name type="synonym">Orconectes limosus</name>
    <dbReference type="NCBI Taxonomy" id="28379"/>
    <lineage>
        <taxon>Eukaryota</taxon>
        <taxon>Metazoa</taxon>
        <taxon>Ecdysozoa</taxon>
        <taxon>Arthropoda</taxon>
        <taxon>Crustacea</taxon>
        <taxon>Multicrustacea</taxon>
        <taxon>Malacostraca</taxon>
        <taxon>Eumalacostraca</taxon>
        <taxon>Eucarida</taxon>
        <taxon>Decapoda</taxon>
        <taxon>Pleocyemata</taxon>
        <taxon>Astacidea</taxon>
        <taxon>Astacoidea</taxon>
        <taxon>Cambaridae</taxon>
        <taxon>Faxonius</taxon>
    </lineage>
</organism>
<name>PDHC_FAXLI</name>
<dbReference type="GO" id="GO:0005576">
    <property type="term" value="C:extracellular region"/>
    <property type="evidence" value="ECO:0007669"/>
    <property type="project" value="UniProtKB-SubCell"/>
</dbReference>
<dbReference type="GO" id="GO:0045202">
    <property type="term" value="C:synapse"/>
    <property type="evidence" value="ECO:0007669"/>
    <property type="project" value="GOC"/>
</dbReference>
<dbReference type="GO" id="GO:0005179">
    <property type="term" value="F:hormone activity"/>
    <property type="evidence" value="ECO:0007669"/>
    <property type="project" value="UniProtKB-KW"/>
</dbReference>
<dbReference type="GO" id="GO:0007268">
    <property type="term" value="P:chemical synaptic transmission"/>
    <property type="evidence" value="ECO:0007669"/>
    <property type="project" value="UniProtKB-KW"/>
</dbReference>
<dbReference type="GO" id="GO:0007218">
    <property type="term" value="P:neuropeptide signaling pathway"/>
    <property type="evidence" value="ECO:0007669"/>
    <property type="project" value="UniProtKB-KW"/>
</dbReference>
<accession>P83587</accession>
<sequence>NSELINAILGSPTLMGEV</sequence>
<proteinExistence type="evidence at protein level"/>
<reference key="1">
    <citation type="journal article" date="2004" name="Mol. Cell. Proteomics">
        <title>Identification of neuropeptides from the sinus gland of the crayfish Orconectes limosus using nanoscale on-line liquid chromatography tandem mass spectrometry.</title>
        <authorList>
            <person name="Bulau P."/>
            <person name="Meisen I."/>
            <person name="Schmitz T."/>
            <person name="Keller R."/>
            <person name="Peter-Katalinic J."/>
        </authorList>
    </citation>
    <scope>PROTEIN SEQUENCE</scope>
    <scope>SUBCELLULAR LOCATION</scope>
    <scope>TISSUE SPECIFICITY</scope>
    <scope>MASS SPECTROMETRY</scope>
    <scope>AMIDATION AT VAL-18</scope>
    <source>
        <tissue>Eyestalk</tissue>
    </source>
</reference>
<comment type="function">
    <text evidence="1">Causes the migration of the distal retinal pigment into the proximal end of the pigment chromatophore cells and thus decreases the amount of light entering the retinulas. May also function as a neurotransmitter and/or neuromodulator (By similarity).</text>
</comment>
<comment type="subcellular location">
    <subcellularLocation>
        <location evidence="2 3">Secreted</location>
    </subcellularLocation>
</comment>
<comment type="tissue specificity">
    <text evidence="2">Eyestalk sinus gland.</text>
</comment>
<comment type="mass spectrometry"/>
<comment type="similarity">
    <text evidence="3">Belongs to the arthropod PDH family.</text>
</comment>
<keyword id="KW-0027">Amidation</keyword>
<keyword id="KW-0903">Direct protein sequencing</keyword>
<keyword id="KW-0372">Hormone</keyword>
<keyword id="KW-0527">Neuropeptide</keyword>
<keyword id="KW-0529">Neurotransmitter</keyword>
<keyword id="KW-0964">Secreted</keyword>
<protein>
    <recommendedName>
        <fullName>Pigment-dispersing hormone C</fullName>
        <shortName>PDH C</shortName>
    </recommendedName>
    <alternativeName>
        <fullName>Light-adapting distal retinal pigment hormone C</fullName>
        <shortName>DRPH C</shortName>
    </alternativeName>
</protein>
<feature type="peptide" id="PRO_0000044233" description="Pigment-dispersing hormone C">
    <location>
        <begin position="1"/>
        <end position="18"/>
    </location>
</feature>
<feature type="modified residue" description="Valine amide" evidence="2">
    <location>
        <position position="18"/>
    </location>
</feature>
<evidence type="ECO:0000250" key="1">
    <source>
        <dbReference type="UniProtKB" id="P37085"/>
    </source>
</evidence>
<evidence type="ECO:0000269" key="2">
    <source>
    </source>
</evidence>
<evidence type="ECO:0000305" key="3"/>